<evidence type="ECO:0000255" key="1">
    <source>
        <dbReference type="HAMAP-Rule" id="MF_00089"/>
    </source>
</evidence>
<keyword id="KW-0004">4Fe-4S</keyword>
<keyword id="KW-0408">Iron</keyword>
<keyword id="KW-0411">Iron-sulfur</keyword>
<keyword id="KW-0456">Lyase</keyword>
<keyword id="KW-0479">Metal-binding</keyword>
<keyword id="KW-0949">S-adenosyl-L-methionine</keyword>
<keyword id="KW-0784">Thiamine biosynthesis</keyword>
<keyword id="KW-0862">Zinc</keyword>
<organism>
    <name type="scientific">Chlorobium phaeovibrioides (strain DSM 265 / 1930)</name>
    <name type="common">Prosthecochloris vibrioformis (strain DSM 265)</name>
    <dbReference type="NCBI Taxonomy" id="290318"/>
    <lineage>
        <taxon>Bacteria</taxon>
        <taxon>Pseudomonadati</taxon>
        <taxon>Chlorobiota</taxon>
        <taxon>Chlorobiia</taxon>
        <taxon>Chlorobiales</taxon>
        <taxon>Chlorobiaceae</taxon>
        <taxon>Chlorobium/Pelodictyon group</taxon>
        <taxon>Chlorobium</taxon>
    </lineage>
</organism>
<feature type="chain" id="PRO_1000075441" description="Phosphomethylpyrimidine synthase">
    <location>
        <begin position="1"/>
        <end position="571"/>
    </location>
</feature>
<feature type="binding site" evidence="1">
    <location>
        <position position="201"/>
    </location>
    <ligand>
        <name>substrate</name>
    </ligand>
</feature>
<feature type="binding site" evidence="1">
    <location>
        <position position="230"/>
    </location>
    <ligand>
        <name>substrate</name>
    </ligand>
</feature>
<feature type="binding site" evidence="1">
    <location>
        <position position="259"/>
    </location>
    <ligand>
        <name>substrate</name>
    </ligand>
</feature>
<feature type="binding site" evidence="1">
    <location>
        <position position="295"/>
    </location>
    <ligand>
        <name>substrate</name>
    </ligand>
</feature>
<feature type="binding site" evidence="1">
    <location>
        <begin position="315"/>
        <end position="317"/>
    </location>
    <ligand>
        <name>substrate</name>
    </ligand>
</feature>
<feature type="binding site" evidence="1">
    <location>
        <begin position="356"/>
        <end position="359"/>
    </location>
    <ligand>
        <name>substrate</name>
    </ligand>
</feature>
<feature type="binding site" evidence="1">
    <location>
        <position position="395"/>
    </location>
    <ligand>
        <name>substrate</name>
    </ligand>
</feature>
<feature type="binding site" evidence="1">
    <location>
        <position position="399"/>
    </location>
    <ligand>
        <name>Zn(2+)</name>
        <dbReference type="ChEBI" id="CHEBI:29105"/>
    </ligand>
</feature>
<feature type="binding site" evidence="1">
    <location>
        <position position="422"/>
    </location>
    <ligand>
        <name>substrate</name>
    </ligand>
</feature>
<feature type="binding site" evidence="1">
    <location>
        <position position="463"/>
    </location>
    <ligand>
        <name>Zn(2+)</name>
        <dbReference type="ChEBI" id="CHEBI:29105"/>
    </ligand>
</feature>
<feature type="binding site" evidence="1">
    <location>
        <position position="545"/>
    </location>
    <ligand>
        <name>[4Fe-4S] cluster</name>
        <dbReference type="ChEBI" id="CHEBI:49883"/>
        <note>4Fe-4S-S-AdoMet</note>
    </ligand>
</feature>
<feature type="binding site" evidence="1">
    <location>
        <position position="548"/>
    </location>
    <ligand>
        <name>[4Fe-4S] cluster</name>
        <dbReference type="ChEBI" id="CHEBI:49883"/>
        <note>4Fe-4S-S-AdoMet</note>
    </ligand>
</feature>
<feature type="binding site" evidence="1">
    <location>
        <position position="553"/>
    </location>
    <ligand>
        <name>[4Fe-4S] cluster</name>
        <dbReference type="ChEBI" id="CHEBI:49883"/>
        <note>4Fe-4S-S-AdoMet</note>
    </ligand>
</feature>
<proteinExistence type="inferred from homology"/>
<accession>A4SFM6</accession>
<sequence>MSTNTTHTSCPKESREDRAFQKTYAEGTLWPVKVGMQTLNLSGTYSCNGVPFSSLPLYDTSGPHSDPSLQVNPAEGLAPVRDSWNFIKSISVPCAAPVNTESMTERHPRMAEDGIALTQMHFARKGVITPEMEYVAIRENQQLEEWIRANGRGGTPSEPITAEFVMSEVAAGRAIIPANINHPELEPMIIGRNFRVKINANIGNSALSSSIAEEVEKAVWACRWGADTVMDLSTGANIHKTREWILRNSPVPIGTVPIYQALEKVNGVAENLTWELYRDTLLEQAEQGVDYFTIHAGILEKHLPLADKRRTGIVSRGGSIMAKWCRANKQENFLYTHFEEICAILKCYDIAVSLGDALRPGSISDANDEAQFGELKVLGELTTLAWKHEVQVMIEGPGHVPLNMIEENMQKQLEYCHEAPFYTLGPLVTDIAAGYDHVNSAIGGTLIASYGCSMLCYVTPKEHLGLPDRNDVREGVVVHKIAAHAADLAKGSPIARLRDELMSSARFAFNWEDQFNLSLDPPKTREVHAASMKAAGHEGEKADFCTMCGPDFCSMKKSKEASAASAIEPGR</sequence>
<protein>
    <recommendedName>
        <fullName evidence="1">Phosphomethylpyrimidine synthase</fullName>
        <ecNumber evidence="1">4.1.99.17</ecNumber>
    </recommendedName>
    <alternativeName>
        <fullName evidence="1">Hydroxymethylpyrimidine phosphate synthase</fullName>
        <shortName evidence="1">HMP-P synthase</shortName>
        <shortName evidence="1">HMP-phosphate synthase</shortName>
        <shortName evidence="1">HMPP synthase</shortName>
    </alternativeName>
    <alternativeName>
        <fullName evidence="1">Thiamine biosynthesis protein ThiC</fullName>
    </alternativeName>
</protein>
<comment type="function">
    <text evidence="1">Catalyzes the synthesis of the hydroxymethylpyrimidine phosphate (HMP-P) moiety of thiamine from aminoimidazole ribotide (AIR) in a radical S-adenosyl-L-methionine (SAM)-dependent reaction.</text>
</comment>
<comment type="catalytic activity">
    <reaction evidence="1">
        <text>5-amino-1-(5-phospho-beta-D-ribosyl)imidazole + S-adenosyl-L-methionine = 4-amino-2-methyl-5-(phosphooxymethyl)pyrimidine + CO + 5'-deoxyadenosine + formate + L-methionine + 3 H(+)</text>
        <dbReference type="Rhea" id="RHEA:24840"/>
        <dbReference type="ChEBI" id="CHEBI:15378"/>
        <dbReference type="ChEBI" id="CHEBI:15740"/>
        <dbReference type="ChEBI" id="CHEBI:17245"/>
        <dbReference type="ChEBI" id="CHEBI:17319"/>
        <dbReference type="ChEBI" id="CHEBI:57844"/>
        <dbReference type="ChEBI" id="CHEBI:58354"/>
        <dbReference type="ChEBI" id="CHEBI:59789"/>
        <dbReference type="ChEBI" id="CHEBI:137981"/>
        <dbReference type="EC" id="4.1.99.17"/>
    </reaction>
</comment>
<comment type="cofactor">
    <cofactor evidence="1">
        <name>[4Fe-4S] cluster</name>
        <dbReference type="ChEBI" id="CHEBI:49883"/>
    </cofactor>
    <text evidence="1">Binds 1 [4Fe-4S] cluster per subunit. The cluster is coordinated with 3 cysteines and an exchangeable S-adenosyl-L-methionine.</text>
</comment>
<comment type="pathway">
    <text evidence="1">Cofactor biosynthesis; thiamine diphosphate biosynthesis.</text>
</comment>
<comment type="similarity">
    <text evidence="1">Belongs to the ThiC family.</text>
</comment>
<reference key="1">
    <citation type="submission" date="2007-03" db="EMBL/GenBank/DDBJ databases">
        <title>Complete sequence of Prosthecochloris vibrioformis DSM 265.</title>
        <authorList>
            <consortium name="US DOE Joint Genome Institute"/>
            <person name="Copeland A."/>
            <person name="Lucas S."/>
            <person name="Lapidus A."/>
            <person name="Barry K."/>
            <person name="Detter J.C."/>
            <person name="Glavina del Rio T."/>
            <person name="Hammon N."/>
            <person name="Israni S."/>
            <person name="Pitluck S."/>
            <person name="Schmutz J."/>
            <person name="Larimer F."/>
            <person name="Land M."/>
            <person name="Hauser L."/>
            <person name="Mikhailova N."/>
            <person name="Li T."/>
            <person name="Overmann J."/>
            <person name="Schuster S.C."/>
            <person name="Bryant D.A."/>
            <person name="Richardson P."/>
        </authorList>
    </citation>
    <scope>NUCLEOTIDE SEQUENCE [LARGE SCALE GENOMIC DNA]</scope>
    <source>
        <strain>DSM 265 / 1930</strain>
    </source>
</reference>
<dbReference type="EC" id="4.1.99.17" evidence="1"/>
<dbReference type="EMBL" id="CP000607">
    <property type="protein sequence ID" value="ABP37285.1"/>
    <property type="molecule type" value="Genomic_DNA"/>
</dbReference>
<dbReference type="SMR" id="A4SFM6"/>
<dbReference type="STRING" id="290318.Cvib_1273"/>
<dbReference type="KEGG" id="pvi:Cvib_1273"/>
<dbReference type="eggNOG" id="COG0422">
    <property type="taxonomic scope" value="Bacteria"/>
</dbReference>
<dbReference type="HOGENOM" id="CLU_013181_2_1_10"/>
<dbReference type="OrthoDB" id="9805897at2"/>
<dbReference type="UniPathway" id="UPA00060"/>
<dbReference type="GO" id="GO:0005829">
    <property type="term" value="C:cytosol"/>
    <property type="evidence" value="ECO:0007669"/>
    <property type="project" value="TreeGrafter"/>
</dbReference>
<dbReference type="GO" id="GO:0051539">
    <property type="term" value="F:4 iron, 4 sulfur cluster binding"/>
    <property type="evidence" value="ECO:0007669"/>
    <property type="project" value="UniProtKB-KW"/>
</dbReference>
<dbReference type="GO" id="GO:0016830">
    <property type="term" value="F:carbon-carbon lyase activity"/>
    <property type="evidence" value="ECO:0007669"/>
    <property type="project" value="InterPro"/>
</dbReference>
<dbReference type="GO" id="GO:0008270">
    <property type="term" value="F:zinc ion binding"/>
    <property type="evidence" value="ECO:0007669"/>
    <property type="project" value="UniProtKB-UniRule"/>
</dbReference>
<dbReference type="GO" id="GO:0009228">
    <property type="term" value="P:thiamine biosynthetic process"/>
    <property type="evidence" value="ECO:0007669"/>
    <property type="project" value="UniProtKB-KW"/>
</dbReference>
<dbReference type="GO" id="GO:0009229">
    <property type="term" value="P:thiamine diphosphate biosynthetic process"/>
    <property type="evidence" value="ECO:0007669"/>
    <property type="project" value="UniProtKB-UniRule"/>
</dbReference>
<dbReference type="FunFam" id="3.20.20.540:FF:000001">
    <property type="entry name" value="Phosphomethylpyrimidine synthase"/>
    <property type="match status" value="1"/>
</dbReference>
<dbReference type="Gene3D" id="6.10.250.620">
    <property type="match status" value="1"/>
</dbReference>
<dbReference type="Gene3D" id="3.20.20.540">
    <property type="entry name" value="Radical SAM ThiC family, central domain"/>
    <property type="match status" value="1"/>
</dbReference>
<dbReference type="HAMAP" id="MF_00089">
    <property type="entry name" value="ThiC"/>
    <property type="match status" value="1"/>
</dbReference>
<dbReference type="InterPro" id="IPR037509">
    <property type="entry name" value="ThiC"/>
</dbReference>
<dbReference type="InterPro" id="IPR025747">
    <property type="entry name" value="ThiC-associated_dom"/>
</dbReference>
<dbReference type="InterPro" id="IPR038521">
    <property type="entry name" value="ThiC/Bza_core_dom"/>
</dbReference>
<dbReference type="InterPro" id="IPR002817">
    <property type="entry name" value="ThiC/BzaA/B"/>
</dbReference>
<dbReference type="NCBIfam" id="NF006763">
    <property type="entry name" value="PRK09284.1"/>
    <property type="match status" value="1"/>
</dbReference>
<dbReference type="NCBIfam" id="NF009895">
    <property type="entry name" value="PRK13352.1"/>
    <property type="match status" value="1"/>
</dbReference>
<dbReference type="NCBIfam" id="TIGR00190">
    <property type="entry name" value="thiC"/>
    <property type="match status" value="1"/>
</dbReference>
<dbReference type="PANTHER" id="PTHR30557:SF1">
    <property type="entry name" value="PHOSPHOMETHYLPYRIMIDINE SYNTHASE, CHLOROPLASTIC"/>
    <property type="match status" value="1"/>
</dbReference>
<dbReference type="PANTHER" id="PTHR30557">
    <property type="entry name" value="THIAMINE BIOSYNTHESIS PROTEIN THIC"/>
    <property type="match status" value="1"/>
</dbReference>
<dbReference type="Pfam" id="PF13667">
    <property type="entry name" value="ThiC-associated"/>
    <property type="match status" value="1"/>
</dbReference>
<dbReference type="Pfam" id="PF01964">
    <property type="entry name" value="ThiC_Rad_SAM"/>
    <property type="match status" value="1"/>
</dbReference>
<dbReference type="SFLD" id="SFLDF00407">
    <property type="entry name" value="phosphomethylpyrimidine_syntha"/>
    <property type="match status" value="1"/>
</dbReference>
<dbReference type="SFLD" id="SFLDG01114">
    <property type="entry name" value="phosphomethylpyrimidine_syntha"/>
    <property type="match status" value="1"/>
</dbReference>
<dbReference type="SFLD" id="SFLDS00113">
    <property type="entry name" value="Radical_SAM_Phosphomethylpyrim"/>
    <property type="match status" value="1"/>
</dbReference>
<name>THIC_CHLPM</name>
<gene>
    <name evidence="1" type="primary">thiC</name>
    <name type="ordered locus">Cvib_1273</name>
</gene>